<keyword id="KW-1003">Cell membrane</keyword>
<keyword id="KW-0449">Lipoprotein</keyword>
<keyword id="KW-0472">Membrane</keyword>
<keyword id="KW-0564">Palmitate</keyword>
<keyword id="KW-0732">Signal</keyword>
<name>Y390_STAAB</name>
<protein>
    <recommendedName>
        <fullName>Uncharacterized lipoprotein SAB0390/SAB0391</fullName>
    </recommendedName>
</protein>
<gene>
    <name type="ordered locus">SAB0390/SAB0391</name>
</gene>
<feature type="signal peptide" evidence="1">
    <location>
        <begin position="1"/>
        <end position="22"/>
    </location>
</feature>
<feature type="chain" id="PRO_0000282096" description="Uncharacterized lipoprotein SAB0390/SAB0391">
    <location>
        <begin position="23"/>
        <end position="260"/>
    </location>
</feature>
<feature type="lipid moiety-binding region" description="N-palmitoyl cysteine" evidence="1">
    <location>
        <position position="23"/>
    </location>
</feature>
<feature type="lipid moiety-binding region" description="S-diacylglycerol cysteine" evidence="1">
    <location>
        <position position="23"/>
    </location>
</feature>
<comment type="subcellular location">
    <subcellularLocation>
        <location evidence="1">Cell membrane</location>
        <topology evidence="1">Lipid-anchor</topology>
    </subcellularLocation>
</comment>
<comment type="similarity">
    <text evidence="2">Belongs to the staphylococcal tandem lipoprotein family.</text>
</comment>
<comment type="sequence caution" evidence="2">
    <conflict type="frameshift">
        <sequence resource="EMBL-CDS" id="CAI80078"/>
    </conflict>
    <text>Produces two separate ORFs.</text>
</comment>
<comment type="sequence caution" evidence="2">
    <conflict type="frameshift">
        <sequence resource="EMBL-CDS" id="CAI80079"/>
    </conflict>
    <text>Produces two separate ORFs.</text>
</comment>
<evidence type="ECO:0000255" key="1">
    <source>
        <dbReference type="PROSITE-ProRule" id="PRU00303"/>
    </source>
</evidence>
<evidence type="ECO:0000305" key="2"/>
<dbReference type="EMBL" id="AJ938182">
    <property type="protein sequence ID" value="CAI80078.1"/>
    <property type="status" value="ALT_FRAME"/>
    <property type="molecule type" value="Genomic_DNA"/>
</dbReference>
<dbReference type="EMBL" id="AJ938182">
    <property type="protein sequence ID" value="CAI80079.1"/>
    <property type="status" value="ALT_FRAME"/>
    <property type="molecule type" value="Genomic_DNA"/>
</dbReference>
<dbReference type="SMR" id="Q2YVR0"/>
<dbReference type="KEGG" id="sab:SAB0390"/>
<dbReference type="KEGG" id="sab:SAB0391"/>
<dbReference type="HOGENOM" id="CLU_071589_2_1_9"/>
<dbReference type="GO" id="GO:0005886">
    <property type="term" value="C:plasma membrane"/>
    <property type="evidence" value="ECO:0007669"/>
    <property type="project" value="UniProtKB-SubCell"/>
</dbReference>
<dbReference type="Gene3D" id="2.50.20.40">
    <property type="match status" value="1"/>
</dbReference>
<dbReference type="InterPro" id="IPR007595">
    <property type="entry name" value="Csa"/>
</dbReference>
<dbReference type="InterPro" id="IPR038641">
    <property type="entry name" value="Csa_sf"/>
</dbReference>
<dbReference type="NCBIfam" id="TIGR01742">
    <property type="entry name" value="SA_tandem_lipo"/>
    <property type="match status" value="1"/>
</dbReference>
<dbReference type="Pfam" id="PF04507">
    <property type="entry name" value="DUF576"/>
    <property type="match status" value="1"/>
</dbReference>
<dbReference type="PROSITE" id="PS51257">
    <property type="entry name" value="PROKAR_LIPOPROTEIN"/>
    <property type="match status" value="1"/>
</dbReference>
<reference key="1">
    <citation type="journal article" date="2007" name="PLoS ONE">
        <title>Molecular correlates of host specialization in Staphylococcus aureus.</title>
        <authorList>
            <person name="Herron-Olson L."/>
            <person name="Fitzgerald J.R."/>
            <person name="Musser J.M."/>
            <person name="Kapur V."/>
        </authorList>
    </citation>
    <scope>NUCLEOTIDE SEQUENCE [LARGE SCALE GENOMIC DNA]</scope>
    <source>
        <strain>bovine RF122 / ET3-1</strain>
    </source>
</reference>
<accession>Q2YVR0</accession>
<accession>Q2YVQ9</accession>
<sequence length="260" mass="30018">MGYLKRFALYISILVLIVMVAGCGKSDETKEDSKEEQIKKSFAKTLDMYPIKNLQDLYDKEGYRDGEFKKGDKGTWTLLTSFAKSNKPGEIDDEGMVLFLNRNTKKATGYYYISKVHDEFNEKEHQKNIMLNLKIIKIVLLDNVEDEKLKQKIENFKFLSQYADFKDLKNYQDGSITTNENVPSYEAEFKLNNSDENVKKLREVYPITTKKSPVLKLHIDGDIKGSSIGYKNIEFNFSKVKDEETAVRDFVNFGPSDENS</sequence>
<proteinExistence type="inferred from homology"/>
<organism>
    <name type="scientific">Staphylococcus aureus (strain bovine RF122 / ET3-1)</name>
    <dbReference type="NCBI Taxonomy" id="273036"/>
    <lineage>
        <taxon>Bacteria</taxon>
        <taxon>Bacillati</taxon>
        <taxon>Bacillota</taxon>
        <taxon>Bacilli</taxon>
        <taxon>Bacillales</taxon>
        <taxon>Staphylococcaceae</taxon>
        <taxon>Staphylococcus</taxon>
    </lineage>
</organism>